<accession>Q132N2</accession>
<protein>
    <recommendedName>
        <fullName evidence="1">Light-independent protochlorophyllide reductase subunit N</fullName>
        <shortName evidence="1">DPOR subunit N</shortName>
        <shortName evidence="1">LI-POR subunit N</shortName>
        <ecNumber evidence="1">1.3.7.7</ecNumber>
    </recommendedName>
</protein>
<dbReference type="EC" id="1.3.7.7" evidence="1"/>
<dbReference type="EMBL" id="CP000283">
    <property type="protein sequence ID" value="ABE40957.1"/>
    <property type="molecule type" value="Genomic_DNA"/>
</dbReference>
<dbReference type="SMR" id="Q132N2"/>
<dbReference type="STRING" id="316057.RPD_3736"/>
<dbReference type="KEGG" id="rpd:RPD_3736"/>
<dbReference type="eggNOG" id="COG2710">
    <property type="taxonomic scope" value="Bacteria"/>
</dbReference>
<dbReference type="HOGENOM" id="CLU_037170_0_0_5"/>
<dbReference type="BioCyc" id="RPAL316057:RPD_RS18785-MONOMER"/>
<dbReference type="UniPathway" id="UPA00671"/>
<dbReference type="Proteomes" id="UP000001818">
    <property type="component" value="Chromosome"/>
</dbReference>
<dbReference type="GO" id="GO:0051539">
    <property type="term" value="F:4 iron, 4 sulfur cluster binding"/>
    <property type="evidence" value="ECO:0007669"/>
    <property type="project" value="UniProtKB-UniRule"/>
</dbReference>
<dbReference type="GO" id="GO:0005524">
    <property type="term" value="F:ATP binding"/>
    <property type="evidence" value="ECO:0007669"/>
    <property type="project" value="UniProtKB-UniRule"/>
</dbReference>
<dbReference type="GO" id="GO:0046872">
    <property type="term" value="F:metal ion binding"/>
    <property type="evidence" value="ECO:0007669"/>
    <property type="project" value="UniProtKB-KW"/>
</dbReference>
<dbReference type="GO" id="GO:0016730">
    <property type="term" value="F:oxidoreductase activity, acting on iron-sulfur proteins as donors"/>
    <property type="evidence" value="ECO:0007669"/>
    <property type="project" value="InterPro"/>
</dbReference>
<dbReference type="GO" id="GO:0016636">
    <property type="term" value="F:oxidoreductase activity, acting on the CH-CH group of donors, iron-sulfur protein as acceptor"/>
    <property type="evidence" value="ECO:0007669"/>
    <property type="project" value="UniProtKB-UniRule"/>
</dbReference>
<dbReference type="GO" id="GO:0036070">
    <property type="term" value="P:light-independent bacteriochlorophyll biosynthetic process"/>
    <property type="evidence" value="ECO:0007669"/>
    <property type="project" value="UniProtKB-UniRule"/>
</dbReference>
<dbReference type="GO" id="GO:0019685">
    <property type="term" value="P:photosynthesis, dark reaction"/>
    <property type="evidence" value="ECO:0007669"/>
    <property type="project" value="InterPro"/>
</dbReference>
<dbReference type="Gene3D" id="3.40.50.1980">
    <property type="entry name" value="Nitrogenase molybdenum iron protein domain"/>
    <property type="match status" value="3"/>
</dbReference>
<dbReference type="HAMAP" id="MF_00352">
    <property type="entry name" value="ChlN_BchN"/>
    <property type="match status" value="1"/>
</dbReference>
<dbReference type="InterPro" id="IPR050293">
    <property type="entry name" value="LIPOR_BchN/ChlN"/>
</dbReference>
<dbReference type="InterPro" id="IPR000510">
    <property type="entry name" value="Nase/OxRdtase_comp1"/>
</dbReference>
<dbReference type="InterPro" id="IPR005970">
    <property type="entry name" value="Protochl_reductN"/>
</dbReference>
<dbReference type="NCBIfam" id="TIGR01279">
    <property type="entry name" value="DPOR_bchN"/>
    <property type="match status" value="1"/>
</dbReference>
<dbReference type="NCBIfam" id="NF002768">
    <property type="entry name" value="PRK02842.1"/>
    <property type="match status" value="1"/>
</dbReference>
<dbReference type="PANTHER" id="PTHR39429">
    <property type="entry name" value="LIGHT-INDEPENDENT PROTOCHLOROPHYLLIDE REDUCTASE SUBUNIT N"/>
    <property type="match status" value="1"/>
</dbReference>
<dbReference type="PANTHER" id="PTHR39429:SF3">
    <property type="entry name" value="LIGHT-INDEPENDENT PROTOCHLOROPHYLLIDE REDUCTASE SUBUNIT N"/>
    <property type="match status" value="1"/>
</dbReference>
<dbReference type="Pfam" id="PF00148">
    <property type="entry name" value="Oxidored_nitro"/>
    <property type="match status" value="1"/>
</dbReference>
<dbReference type="PIRSF" id="PIRSF000162">
    <property type="entry name" value="P_chlorophyll_rd"/>
    <property type="match status" value="1"/>
</dbReference>
<dbReference type="SUPFAM" id="SSF53807">
    <property type="entry name" value="Helical backbone' metal receptor"/>
    <property type="match status" value="1"/>
</dbReference>
<evidence type="ECO:0000255" key="1">
    <source>
        <dbReference type="HAMAP-Rule" id="MF_00352"/>
    </source>
</evidence>
<reference key="1">
    <citation type="submission" date="2006-03" db="EMBL/GenBank/DDBJ databases">
        <title>Complete sequence of Rhodopseudomonas palustris BisB5.</title>
        <authorList>
            <consortium name="US DOE Joint Genome Institute"/>
            <person name="Copeland A."/>
            <person name="Lucas S."/>
            <person name="Lapidus A."/>
            <person name="Barry K."/>
            <person name="Detter J.C."/>
            <person name="Glavina del Rio T."/>
            <person name="Hammon N."/>
            <person name="Israni S."/>
            <person name="Dalin E."/>
            <person name="Tice H."/>
            <person name="Pitluck S."/>
            <person name="Chain P."/>
            <person name="Malfatti S."/>
            <person name="Shin M."/>
            <person name="Vergez L."/>
            <person name="Schmutz J."/>
            <person name="Larimer F."/>
            <person name="Land M."/>
            <person name="Hauser L."/>
            <person name="Pelletier D.A."/>
            <person name="Kyrpides N."/>
            <person name="Lykidis A."/>
            <person name="Oda Y."/>
            <person name="Harwood C.S."/>
            <person name="Richardson P."/>
        </authorList>
    </citation>
    <scope>NUCLEOTIDE SEQUENCE [LARGE SCALE GENOMIC DNA]</scope>
    <source>
        <strain>BisB5</strain>
    </source>
</reference>
<keyword id="KW-0004">4Fe-4S</keyword>
<keyword id="KW-0067">ATP-binding</keyword>
<keyword id="KW-0077">Bacteriochlorophyll biosynthesis</keyword>
<keyword id="KW-0149">Chlorophyll biosynthesis</keyword>
<keyword id="KW-0408">Iron</keyword>
<keyword id="KW-0411">Iron-sulfur</keyword>
<keyword id="KW-0479">Metal-binding</keyword>
<keyword id="KW-0547">Nucleotide-binding</keyword>
<keyword id="KW-0560">Oxidoreductase</keyword>
<keyword id="KW-0602">Photosynthesis</keyword>
<proteinExistence type="inferred from homology"/>
<name>BCHN_RHOPS</name>
<feature type="chain" id="PRO_0000324022" description="Light-independent protochlorophyllide reductase subunit N">
    <location>
        <begin position="1"/>
        <end position="428"/>
    </location>
</feature>
<feature type="binding site" evidence="1">
    <location>
        <position position="31"/>
    </location>
    <ligand>
        <name>[4Fe-4S] cluster</name>
        <dbReference type="ChEBI" id="CHEBI:49883"/>
        <note>ligand shared with heterodimeric partner</note>
    </ligand>
</feature>
<feature type="binding site" evidence="1">
    <location>
        <position position="56"/>
    </location>
    <ligand>
        <name>[4Fe-4S] cluster</name>
        <dbReference type="ChEBI" id="CHEBI:49883"/>
        <note>ligand shared with heterodimeric partner</note>
    </ligand>
</feature>
<feature type="binding site" evidence="1">
    <location>
        <position position="117"/>
    </location>
    <ligand>
        <name>[4Fe-4S] cluster</name>
        <dbReference type="ChEBI" id="CHEBI:49883"/>
        <note>ligand shared with heterodimeric partner</note>
    </ligand>
</feature>
<organism>
    <name type="scientific">Rhodopseudomonas palustris (strain BisB5)</name>
    <dbReference type="NCBI Taxonomy" id="316057"/>
    <lineage>
        <taxon>Bacteria</taxon>
        <taxon>Pseudomonadati</taxon>
        <taxon>Pseudomonadota</taxon>
        <taxon>Alphaproteobacteria</taxon>
        <taxon>Hyphomicrobiales</taxon>
        <taxon>Nitrobacteraceae</taxon>
        <taxon>Rhodopseudomonas</taxon>
    </lineage>
</organism>
<comment type="function">
    <text evidence="1">Component of the dark-operative protochlorophyllide reductase (DPOR) that uses Mg-ATP and reduced ferredoxin to reduce ring D of protochlorophyllide (Pchlide) to form chlorophyllide a (Chlide). This reaction is light-independent. The NB-protein (BchN-BchB) is the catalytic component of the complex.</text>
</comment>
<comment type="catalytic activity">
    <reaction evidence="1">
        <text>chlorophyllide a + oxidized 2[4Fe-4S]-[ferredoxin] + 2 ADP + 2 phosphate = protochlorophyllide a + reduced 2[4Fe-4S]-[ferredoxin] + 2 ATP + 2 H2O</text>
        <dbReference type="Rhea" id="RHEA:28202"/>
        <dbReference type="Rhea" id="RHEA-COMP:10002"/>
        <dbReference type="Rhea" id="RHEA-COMP:10004"/>
        <dbReference type="ChEBI" id="CHEBI:15377"/>
        <dbReference type="ChEBI" id="CHEBI:30616"/>
        <dbReference type="ChEBI" id="CHEBI:33722"/>
        <dbReference type="ChEBI" id="CHEBI:33723"/>
        <dbReference type="ChEBI" id="CHEBI:43474"/>
        <dbReference type="ChEBI" id="CHEBI:83348"/>
        <dbReference type="ChEBI" id="CHEBI:83350"/>
        <dbReference type="ChEBI" id="CHEBI:456216"/>
        <dbReference type="EC" id="1.3.7.7"/>
    </reaction>
</comment>
<comment type="cofactor">
    <cofactor evidence="1">
        <name>[4Fe-4S] cluster</name>
        <dbReference type="ChEBI" id="CHEBI:49883"/>
    </cofactor>
    <text evidence="1">Binds 1 [4Fe-4S] cluster per heterodimer. The cluster is bound at the heterodimer interface by residues from both subunits.</text>
</comment>
<comment type="pathway">
    <text evidence="1">Porphyrin-containing compound metabolism; bacteriochlorophyll biosynthesis (light-independent).</text>
</comment>
<comment type="subunit">
    <text evidence="1">Protochlorophyllide reductase is composed of three subunits; BchL, BchN and BchB. Forms a heterotetramer of two BchB and two BchN subunits.</text>
</comment>
<comment type="similarity">
    <text evidence="1">Belongs to the BchN/ChlN family.</text>
</comment>
<sequence>MTVHVSNCAATAEDPVSREIRTESGQREVFCGLTGIVWLHRKIQDAFFLVVGSRTCAHLIQSAAGVMIFAEPRFGTAIMEEKDLAGLTDANIELDRIVTQLLTRRPDIKLLFLVGSCPSEVIKLDLSRAALRLSQRFSPGVRILNYSGSGIETTFTQGEDACLASLVPELPAAQDEKSSLLVVGSLADVVEDQFMRMFDALGIGPVQFFPPRKSTALPSVGPNTKILMAQPFLPDTVRALQERGAKRLAAPFPLGVEGTTGWLRAAADAFGVDPAHFDKVTGPNRARAERALAAYRTELADRRIFFFPDSQLEIPLARFLSRELSMKLVEVGTPYLHREHLAEELKLLPAGVAITEGQDVDLQLDRCRLARPDIVVCGLGLANPLEAEGITTKWSIELVFTPIQGYEQAADLAELFARPLVRRAKLVA</sequence>
<gene>
    <name evidence="1" type="primary">bchN</name>
    <name type="ordered locus">RPD_3736</name>
</gene>